<proteinExistence type="inferred from homology"/>
<dbReference type="EMBL" id="BX571857">
    <property type="protein sequence ID" value="CAG44064.1"/>
    <property type="molecule type" value="Genomic_DNA"/>
</dbReference>
<dbReference type="RefSeq" id="WP_000761395.1">
    <property type="nucleotide sequence ID" value="NC_002953.3"/>
</dbReference>
<dbReference type="SMR" id="Q6G6W0"/>
<dbReference type="KEGG" id="sas:SAS2251"/>
<dbReference type="HOGENOM" id="CLU_060907_1_0_9"/>
<dbReference type="GO" id="GO:0005886">
    <property type="term" value="C:plasma membrane"/>
    <property type="evidence" value="ECO:0007669"/>
    <property type="project" value="UniProtKB-SubCell"/>
</dbReference>
<dbReference type="InterPro" id="IPR051125">
    <property type="entry name" value="ABC-4/HrtB_transporter"/>
</dbReference>
<dbReference type="InterPro" id="IPR003838">
    <property type="entry name" value="ABC3_permease_C"/>
</dbReference>
<dbReference type="PANTHER" id="PTHR43738">
    <property type="entry name" value="ABC TRANSPORTER, MEMBRANE PROTEIN"/>
    <property type="match status" value="1"/>
</dbReference>
<dbReference type="PANTHER" id="PTHR43738:SF1">
    <property type="entry name" value="HEMIN TRANSPORT SYSTEM PERMEASE PROTEIN HRTB-RELATED"/>
    <property type="match status" value="1"/>
</dbReference>
<dbReference type="Pfam" id="PF02687">
    <property type="entry name" value="FtsX"/>
    <property type="match status" value="1"/>
</dbReference>
<evidence type="ECO:0000250" key="1"/>
<evidence type="ECO:0000255" key="2"/>
<evidence type="ECO:0000305" key="3"/>
<name>HRTB_STAAS</name>
<organism>
    <name type="scientific">Staphylococcus aureus (strain MSSA476)</name>
    <dbReference type="NCBI Taxonomy" id="282459"/>
    <lineage>
        <taxon>Bacteria</taxon>
        <taxon>Bacillati</taxon>
        <taxon>Bacillota</taxon>
        <taxon>Bacilli</taxon>
        <taxon>Bacillales</taxon>
        <taxon>Staphylococcaceae</taxon>
        <taxon>Staphylococcus</taxon>
    </lineage>
</organism>
<gene>
    <name type="primary">hrtB</name>
    <name type="ordered locus">SAS2251</name>
</gene>
<comment type="function">
    <text evidence="1">Part of the ABC transporter complex hrt involved in hemin import. Responsible for the translocation of the substrate across the membrane (By similarity).</text>
</comment>
<comment type="subunit">
    <text evidence="1">The complex is composed of two ATP-binding proteins (HrtA), two transmembrane proteins (HrtB) and a solute-binding protein.</text>
</comment>
<comment type="subcellular location">
    <subcellularLocation>
        <location evidence="3">Cell membrane</location>
        <topology evidence="3">Multi-pass membrane protein</topology>
    </subcellularLocation>
</comment>
<comment type="similarity">
    <text evidence="3">Belongs to the ABC-4 integral membrane protein family. HrtB subfamily.</text>
</comment>
<reference key="1">
    <citation type="journal article" date="2004" name="Proc. Natl. Acad. Sci. U.S.A.">
        <title>Complete genomes of two clinical Staphylococcus aureus strains: evidence for the rapid evolution of virulence and drug resistance.</title>
        <authorList>
            <person name="Holden M.T.G."/>
            <person name="Feil E.J."/>
            <person name="Lindsay J.A."/>
            <person name="Peacock S.J."/>
            <person name="Day N.P.J."/>
            <person name="Enright M.C."/>
            <person name="Foster T.J."/>
            <person name="Moore C.E."/>
            <person name="Hurst L."/>
            <person name="Atkin R."/>
            <person name="Barron A."/>
            <person name="Bason N."/>
            <person name="Bentley S.D."/>
            <person name="Chillingworth C."/>
            <person name="Chillingworth T."/>
            <person name="Churcher C."/>
            <person name="Clark L."/>
            <person name="Corton C."/>
            <person name="Cronin A."/>
            <person name="Doggett J."/>
            <person name="Dowd L."/>
            <person name="Feltwell T."/>
            <person name="Hance Z."/>
            <person name="Harris B."/>
            <person name="Hauser H."/>
            <person name="Holroyd S."/>
            <person name="Jagels K."/>
            <person name="James K.D."/>
            <person name="Lennard N."/>
            <person name="Line A."/>
            <person name="Mayes R."/>
            <person name="Moule S."/>
            <person name="Mungall K."/>
            <person name="Ormond D."/>
            <person name="Quail M.A."/>
            <person name="Rabbinowitsch E."/>
            <person name="Rutherford K.M."/>
            <person name="Sanders M."/>
            <person name="Sharp S."/>
            <person name="Simmonds M."/>
            <person name="Stevens K."/>
            <person name="Whitehead S."/>
            <person name="Barrell B.G."/>
            <person name="Spratt B.G."/>
            <person name="Parkhill J."/>
        </authorList>
    </citation>
    <scope>NUCLEOTIDE SEQUENCE [LARGE SCALE GENOMIC DNA]</scope>
    <source>
        <strain>MSSA476</strain>
    </source>
</reference>
<protein>
    <recommendedName>
        <fullName>Putative hemin transport system permease protein HrtB</fullName>
    </recommendedName>
</protein>
<keyword id="KW-1003">Cell membrane</keyword>
<keyword id="KW-0472">Membrane</keyword>
<keyword id="KW-0812">Transmembrane</keyword>
<keyword id="KW-1133">Transmembrane helix</keyword>
<keyword id="KW-0813">Transport</keyword>
<sequence>MKLAIKEIMFYKFRYILITLIILLLSIMVLFISGLAQGLGRENISLFEHFDNDEYVVQKMKEPQIEKSQLSDTQQNQIKKVIHQEPYKMNIQTLKLSNKEQDVITMNDVKQQRIQLKKGDYPKNAHEVAINDKLAADNIRVGDRLHFKNNSTSYRVSGILNDTMYAHSSIVLLNDNGFNALNKVNTAFYPVKNLTQQQRDELNKINDVQVVSEKDLTGNIASYQAEQAPLNMMIVSLFAITAIVLSAFFYVMTIQKISQIGILKAIGIKTRHLLSALVLQILTLTIIGVGIAVIIIVGLSFMMPVTMPFYLTTQNILLMVGIFILVAILGASLSFIKLFKVDPIEAIGGAE</sequence>
<accession>Q6G6W0</accession>
<feature type="chain" id="PRO_0000270527" description="Putative hemin transport system permease protein HrtB">
    <location>
        <begin position="1"/>
        <end position="351"/>
    </location>
</feature>
<feature type="transmembrane region" description="Helical" evidence="2">
    <location>
        <begin position="16"/>
        <end position="36"/>
    </location>
</feature>
<feature type="transmembrane region" description="Helical" evidence="2">
    <location>
        <begin position="234"/>
        <end position="254"/>
    </location>
</feature>
<feature type="transmembrane region" description="Helical" evidence="2">
    <location>
        <begin position="281"/>
        <end position="301"/>
    </location>
</feature>
<feature type="transmembrane region" description="Helical" evidence="2">
    <location>
        <begin position="316"/>
        <end position="336"/>
    </location>
</feature>